<protein>
    <recommendedName>
        <fullName evidence="1">Adenylyl-sulfate kinase</fullName>
        <ecNumber evidence="1">2.7.1.25</ecNumber>
    </recommendedName>
    <alternativeName>
        <fullName evidence="1">APS kinase</fullName>
    </alternativeName>
    <alternativeName>
        <fullName evidence="1">ATP adenosine-5'-phosphosulfate 3'-phosphotransferase</fullName>
    </alternativeName>
    <alternativeName>
        <fullName evidence="1">Adenosine-5'-phosphosulfate kinase</fullName>
    </alternativeName>
</protein>
<sequence>MGRSAGFILWLTGLSGAGKSTLSRALRAHLASSMPVEVLDGDEVRTWLSRGLGFTREDREENVRRIGHVARLLAKHGVGVIAAAISPYASSRAEVRRLAEEAGIPFVEIYVQAPLDVLIARDVKGLYKKALAGELAHFTGVSDPYEAPDAPDVTVHSDVDTVEAGLWRVLETLRKRGLLDAAAAA</sequence>
<accession>Q1D6P1</accession>
<evidence type="ECO:0000255" key="1">
    <source>
        <dbReference type="HAMAP-Rule" id="MF_00065"/>
    </source>
</evidence>
<feature type="chain" id="PRO_1000057445" description="Adenylyl-sulfate kinase">
    <location>
        <begin position="1"/>
        <end position="185"/>
    </location>
</feature>
<feature type="active site" description="Phosphoserine intermediate" evidence="1">
    <location>
        <position position="86"/>
    </location>
</feature>
<feature type="binding site" evidence="1">
    <location>
        <begin position="13"/>
        <end position="20"/>
    </location>
    <ligand>
        <name>ATP</name>
        <dbReference type="ChEBI" id="CHEBI:30616"/>
    </ligand>
</feature>
<name>CYSC_MYXXD</name>
<proteinExistence type="inferred from homology"/>
<gene>
    <name evidence="1" type="primary">cysC</name>
    <name type="ordered locus">MXAN_3487</name>
</gene>
<dbReference type="EC" id="2.7.1.25" evidence="1"/>
<dbReference type="EMBL" id="CP000113">
    <property type="protein sequence ID" value="ABF86456.1"/>
    <property type="molecule type" value="Genomic_DNA"/>
</dbReference>
<dbReference type="RefSeq" id="WP_011553518.1">
    <property type="nucleotide sequence ID" value="NC_008095.1"/>
</dbReference>
<dbReference type="SMR" id="Q1D6P1"/>
<dbReference type="STRING" id="246197.MXAN_3487"/>
<dbReference type="EnsemblBacteria" id="ABF86456">
    <property type="protein sequence ID" value="ABF86456"/>
    <property type="gene ID" value="MXAN_3487"/>
</dbReference>
<dbReference type="GeneID" id="41360834"/>
<dbReference type="KEGG" id="mxa:MXAN_3487"/>
<dbReference type="eggNOG" id="COG0529">
    <property type="taxonomic scope" value="Bacteria"/>
</dbReference>
<dbReference type="HOGENOM" id="CLU_046932_2_1_7"/>
<dbReference type="OrthoDB" id="9804504at2"/>
<dbReference type="BRENDA" id="2.7.1.25">
    <property type="organism ID" value="3551"/>
</dbReference>
<dbReference type="UniPathway" id="UPA00140">
    <property type="reaction ID" value="UER00205"/>
</dbReference>
<dbReference type="Proteomes" id="UP000002402">
    <property type="component" value="Chromosome"/>
</dbReference>
<dbReference type="GO" id="GO:0005737">
    <property type="term" value="C:cytoplasm"/>
    <property type="evidence" value="ECO:0007669"/>
    <property type="project" value="TreeGrafter"/>
</dbReference>
<dbReference type="GO" id="GO:0004020">
    <property type="term" value="F:adenylylsulfate kinase activity"/>
    <property type="evidence" value="ECO:0007669"/>
    <property type="project" value="UniProtKB-UniRule"/>
</dbReference>
<dbReference type="GO" id="GO:0005524">
    <property type="term" value="F:ATP binding"/>
    <property type="evidence" value="ECO:0007669"/>
    <property type="project" value="UniProtKB-UniRule"/>
</dbReference>
<dbReference type="GO" id="GO:0004781">
    <property type="term" value="F:sulfate adenylyltransferase (ATP) activity"/>
    <property type="evidence" value="ECO:0007669"/>
    <property type="project" value="TreeGrafter"/>
</dbReference>
<dbReference type="GO" id="GO:0070814">
    <property type="term" value="P:hydrogen sulfide biosynthetic process"/>
    <property type="evidence" value="ECO:0007669"/>
    <property type="project" value="UniProtKB-UniRule"/>
</dbReference>
<dbReference type="GO" id="GO:0010134">
    <property type="term" value="P:sulfate assimilation via adenylyl sulfate reduction"/>
    <property type="evidence" value="ECO:0007669"/>
    <property type="project" value="TreeGrafter"/>
</dbReference>
<dbReference type="GO" id="GO:0019379">
    <property type="term" value="P:sulfate assimilation, phosphoadenylyl sulfate reduction by phosphoadenylyl-sulfate reductase (thioredoxin)"/>
    <property type="evidence" value="ECO:0007669"/>
    <property type="project" value="TreeGrafter"/>
</dbReference>
<dbReference type="CDD" id="cd02027">
    <property type="entry name" value="APSK"/>
    <property type="match status" value="1"/>
</dbReference>
<dbReference type="Gene3D" id="3.40.50.300">
    <property type="entry name" value="P-loop containing nucleotide triphosphate hydrolases"/>
    <property type="match status" value="1"/>
</dbReference>
<dbReference type="HAMAP" id="MF_00065">
    <property type="entry name" value="Adenylyl_sulf_kinase"/>
    <property type="match status" value="1"/>
</dbReference>
<dbReference type="InterPro" id="IPR002891">
    <property type="entry name" value="APS_kinase"/>
</dbReference>
<dbReference type="InterPro" id="IPR027417">
    <property type="entry name" value="P-loop_NTPase"/>
</dbReference>
<dbReference type="InterPro" id="IPR050512">
    <property type="entry name" value="Sulf_AdTrans/APS_kinase"/>
</dbReference>
<dbReference type="NCBIfam" id="TIGR00455">
    <property type="entry name" value="apsK"/>
    <property type="match status" value="1"/>
</dbReference>
<dbReference type="NCBIfam" id="NF003013">
    <property type="entry name" value="PRK03846.1"/>
    <property type="match status" value="1"/>
</dbReference>
<dbReference type="PANTHER" id="PTHR42700">
    <property type="entry name" value="SULFATE ADENYLYLTRANSFERASE"/>
    <property type="match status" value="1"/>
</dbReference>
<dbReference type="PANTHER" id="PTHR42700:SF1">
    <property type="entry name" value="SULFATE ADENYLYLTRANSFERASE"/>
    <property type="match status" value="1"/>
</dbReference>
<dbReference type="Pfam" id="PF01583">
    <property type="entry name" value="APS_kinase"/>
    <property type="match status" value="1"/>
</dbReference>
<dbReference type="SUPFAM" id="SSF52540">
    <property type="entry name" value="P-loop containing nucleoside triphosphate hydrolases"/>
    <property type="match status" value="1"/>
</dbReference>
<organism>
    <name type="scientific">Myxococcus xanthus (strain DK1622)</name>
    <dbReference type="NCBI Taxonomy" id="246197"/>
    <lineage>
        <taxon>Bacteria</taxon>
        <taxon>Pseudomonadati</taxon>
        <taxon>Myxococcota</taxon>
        <taxon>Myxococcia</taxon>
        <taxon>Myxococcales</taxon>
        <taxon>Cystobacterineae</taxon>
        <taxon>Myxococcaceae</taxon>
        <taxon>Myxococcus</taxon>
    </lineage>
</organism>
<reference key="1">
    <citation type="journal article" date="2006" name="Proc. Natl. Acad. Sci. U.S.A.">
        <title>Evolution of sensory complexity recorded in a myxobacterial genome.</title>
        <authorList>
            <person name="Goldman B.S."/>
            <person name="Nierman W.C."/>
            <person name="Kaiser D."/>
            <person name="Slater S.C."/>
            <person name="Durkin A.S."/>
            <person name="Eisen J.A."/>
            <person name="Ronning C.M."/>
            <person name="Barbazuk W.B."/>
            <person name="Blanchard M."/>
            <person name="Field C."/>
            <person name="Halling C."/>
            <person name="Hinkle G."/>
            <person name="Iartchuk O."/>
            <person name="Kim H.S."/>
            <person name="Mackenzie C."/>
            <person name="Madupu R."/>
            <person name="Miller N."/>
            <person name="Shvartsbeyn A."/>
            <person name="Sullivan S.A."/>
            <person name="Vaudin M."/>
            <person name="Wiegand R."/>
            <person name="Kaplan H.B."/>
        </authorList>
    </citation>
    <scope>NUCLEOTIDE SEQUENCE [LARGE SCALE GENOMIC DNA]</scope>
    <source>
        <strain>DK1622</strain>
    </source>
</reference>
<keyword id="KW-0067">ATP-binding</keyword>
<keyword id="KW-0418">Kinase</keyword>
<keyword id="KW-0547">Nucleotide-binding</keyword>
<keyword id="KW-0597">Phosphoprotein</keyword>
<keyword id="KW-1185">Reference proteome</keyword>
<keyword id="KW-0808">Transferase</keyword>
<comment type="function">
    <text evidence="1">Catalyzes the synthesis of activated sulfate.</text>
</comment>
<comment type="catalytic activity">
    <reaction evidence="1">
        <text>adenosine 5'-phosphosulfate + ATP = 3'-phosphoadenylyl sulfate + ADP + H(+)</text>
        <dbReference type="Rhea" id="RHEA:24152"/>
        <dbReference type="ChEBI" id="CHEBI:15378"/>
        <dbReference type="ChEBI" id="CHEBI:30616"/>
        <dbReference type="ChEBI" id="CHEBI:58243"/>
        <dbReference type="ChEBI" id="CHEBI:58339"/>
        <dbReference type="ChEBI" id="CHEBI:456216"/>
        <dbReference type="EC" id="2.7.1.25"/>
    </reaction>
</comment>
<comment type="pathway">
    <text evidence="1">Sulfur metabolism; hydrogen sulfide biosynthesis; sulfite from sulfate: step 2/3.</text>
</comment>
<comment type="similarity">
    <text evidence="1">Belongs to the APS kinase family.</text>
</comment>